<name>Y3432_YERPN</name>
<feature type="chain" id="PRO_1000009281" description="UPF0102 protein YPN_3432">
    <location>
        <begin position="1"/>
        <end position="117"/>
    </location>
</feature>
<protein>
    <recommendedName>
        <fullName evidence="1">UPF0102 protein YPN_3432</fullName>
    </recommendedName>
</protein>
<evidence type="ECO:0000255" key="1">
    <source>
        <dbReference type="HAMAP-Rule" id="MF_00048"/>
    </source>
</evidence>
<organism>
    <name type="scientific">Yersinia pestis bv. Antiqua (strain Nepal516)</name>
    <dbReference type="NCBI Taxonomy" id="377628"/>
    <lineage>
        <taxon>Bacteria</taxon>
        <taxon>Pseudomonadati</taxon>
        <taxon>Pseudomonadota</taxon>
        <taxon>Gammaproteobacteria</taxon>
        <taxon>Enterobacterales</taxon>
        <taxon>Yersiniaceae</taxon>
        <taxon>Yersinia</taxon>
    </lineage>
</organism>
<sequence>MSQRDTGAHYENLARRHLERAGLVFQAANVAFRGGEIDLIMRDGDAWVFVEVRFRRNDLFGGAAASITPRKQQRLHLAAAVWLAQRGASFATTSCRFDVVAITGNQLEWLPNAFNTD</sequence>
<comment type="similarity">
    <text evidence="1">Belongs to the UPF0102 family.</text>
</comment>
<reference key="1">
    <citation type="journal article" date="2006" name="J. Bacteriol.">
        <title>Complete genome sequence of Yersinia pestis strains Antiqua and Nepal516: evidence of gene reduction in an emerging pathogen.</title>
        <authorList>
            <person name="Chain P.S.G."/>
            <person name="Hu P."/>
            <person name="Malfatti S.A."/>
            <person name="Radnedge L."/>
            <person name="Larimer F."/>
            <person name="Vergez L.M."/>
            <person name="Worsham P."/>
            <person name="Chu M.C."/>
            <person name="Andersen G.L."/>
        </authorList>
    </citation>
    <scope>NUCLEOTIDE SEQUENCE [LARGE SCALE GENOMIC DNA]</scope>
    <source>
        <strain>Nepal516</strain>
    </source>
</reference>
<reference key="2">
    <citation type="submission" date="2009-04" db="EMBL/GenBank/DDBJ databases">
        <title>Yersinia pestis Nepal516A whole genome shotgun sequencing project.</title>
        <authorList>
            <person name="Plunkett G. III"/>
            <person name="Anderson B.D."/>
            <person name="Baumler D.J."/>
            <person name="Burland V."/>
            <person name="Cabot E.L."/>
            <person name="Glasner J.D."/>
            <person name="Mau B."/>
            <person name="Neeno-Eckwall E."/>
            <person name="Perna N.T."/>
            <person name="Munk A.C."/>
            <person name="Tapia R."/>
            <person name="Green L.D."/>
            <person name="Rogers Y.C."/>
            <person name="Detter J.C."/>
            <person name="Bruce D.C."/>
            <person name="Brettin T.S."/>
        </authorList>
    </citation>
    <scope>NUCLEOTIDE SEQUENCE [LARGE SCALE GENOMIC DNA]</scope>
    <source>
        <strain>Nepal516</strain>
    </source>
</reference>
<proteinExistence type="inferred from homology"/>
<gene>
    <name type="ordered locus">YPN_3432</name>
    <name type="ORF">YP516_3902</name>
</gene>
<accession>Q1CE21</accession>
<accession>D1Q1A5</accession>
<dbReference type="EMBL" id="CP000305">
    <property type="protein sequence ID" value="ABG19759.1"/>
    <property type="molecule type" value="Genomic_DNA"/>
</dbReference>
<dbReference type="EMBL" id="ACNQ01000019">
    <property type="protein sequence ID" value="EEO74308.1"/>
    <property type="molecule type" value="Genomic_DNA"/>
</dbReference>
<dbReference type="RefSeq" id="WP_002210147.1">
    <property type="nucleotide sequence ID" value="NZ_ACNQ01000019.1"/>
</dbReference>
<dbReference type="SMR" id="Q1CE21"/>
<dbReference type="KEGG" id="ypn:YPN_3432"/>
<dbReference type="HOGENOM" id="CLU_115353_1_0_6"/>
<dbReference type="Proteomes" id="UP000008936">
    <property type="component" value="Chromosome"/>
</dbReference>
<dbReference type="GO" id="GO:0003676">
    <property type="term" value="F:nucleic acid binding"/>
    <property type="evidence" value="ECO:0007669"/>
    <property type="project" value="InterPro"/>
</dbReference>
<dbReference type="CDD" id="cd20736">
    <property type="entry name" value="PoNe_Nuclease"/>
    <property type="match status" value="1"/>
</dbReference>
<dbReference type="Gene3D" id="3.40.1350.10">
    <property type="match status" value="1"/>
</dbReference>
<dbReference type="HAMAP" id="MF_00048">
    <property type="entry name" value="UPF0102"/>
    <property type="match status" value="1"/>
</dbReference>
<dbReference type="InterPro" id="IPR011335">
    <property type="entry name" value="Restrct_endonuc-II-like"/>
</dbReference>
<dbReference type="InterPro" id="IPR011856">
    <property type="entry name" value="tRNA_endonuc-like_dom_sf"/>
</dbReference>
<dbReference type="InterPro" id="IPR003509">
    <property type="entry name" value="UPF0102_YraN-like"/>
</dbReference>
<dbReference type="NCBIfam" id="NF009150">
    <property type="entry name" value="PRK12497.1-3"/>
    <property type="match status" value="1"/>
</dbReference>
<dbReference type="NCBIfam" id="TIGR00252">
    <property type="entry name" value="YraN family protein"/>
    <property type="match status" value="1"/>
</dbReference>
<dbReference type="PANTHER" id="PTHR34039">
    <property type="entry name" value="UPF0102 PROTEIN YRAN"/>
    <property type="match status" value="1"/>
</dbReference>
<dbReference type="PANTHER" id="PTHR34039:SF1">
    <property type="entry name" value="UPF0102 PROTEIN YRAN"/>
    <property type="match status" value="1"/>
</dbReference>
<dbReference type="Pfam" id="PF02021">
    <property type="entry name" value="UPF0102"/>
    <property type="match status" value="1"/>
</dbReference>
<dbReference type="SUPFAM" id="SSF52980">
    <property type="entry name" value="Restriction endonuclease-like"/>
    <property type="match status" value="1"/>
</dbReference>